<name>TM131_MOUSE</name>
<protein>
    <recommendedName>
        <fullName>Transmembrane protein 131</fullName>
    </recommendedName>
    <alternativeName>
        <fullName>Protein RW1</fullName>
    </alternativeName>
</protein>
<gene>
    <name evidence="5" type="primary">Tmem131</name>
    <name type="synonym">D1Bwg0491e</name>
    <name type="synonym">Kiaa0257</name>
    <name type="synonym">Rw1</name>
</gene>
<evidence type="ECO:0000250" key="1">
    <source>
        <dbReference type="UniProtKB" id="Q92545"/>
    </source>
</evidence>
<evidence type="ECO:0000255" key="2"/>
<evidence type="ECO:0000256" key="3">
    <source>
        <dbReference type="SAM" id="MobiDB-lite"/>
    </source>
</evidence>
<evidence type="ECO:0000305" key="4"/>
<evidence type="ECO:0000312" key="5">
    <source>
        <dbReference type="MGI" id="MGI:1927110"/>
    </source>
</evidence>
<evidence type="ECO:0000312" key="6">
    <source>
        <dbReference type="Proteomes" id="UP000000589"/>
    </source>
</evidence>
<comment type="function">
    <text evidence="1">Collagen binding transmembrane protein involved in collagen secretion by recruiting the ER-to-Golgi transport complex TRAPPIII (By similarity). May play a role in the immune response to viral infection.</text>
</comment>
<comment type="subunit">
    <text evidence="1">Interacts (via PapD-L domain) with COL1A2 (via C-terminus); the interaction is direct, may occur with other collagen proteins, and is involved in assembly and TRAPPIII ER-to-Golgi transport complex-dependent secretion of collagen (By similarity). Interacts (via C-terminus) with TRAPPC8 (via C-terminus); the interaction is direct (By similarity).</text>
</comment>
<comment type="subcellular location">
    <subcellularLocation>
        <location evidence="2">Membrane</location>
        <topology evidence="2">Single-pass type I membrane protein</topology>
    </subcellularLocation>
</comment>
<comment type="domain">
    <text evidence="1">Possesses a PapD-like (PapD-L) domain similar to PapD domains involved in assembly and secretion of bacterial pilus components (By similarity). The PapD-L domain can bind collagens and is probably involved in collagen assembly and secretion (By similarity).</text>
</comment>
<comment type="similarity">
    <text evidence="4">Belongs to the TMEM131 family.</text>
</comment>
<comment type="sequence caution" evidence="4">
    <conflict type="miscellaneous discrepancy">
        <sequence resource="EMBL-CDS" id="AAC15232"/>
    </conflict>
    <text>Contaminating sequence. Sequence of unknown origin in the N-terminal part.</text>
</comment>
<keyword id="KW-0472">Membrane</keyword>
<keyword id="KW-0597">Phosphoprotein</keyword>
<keyword id="KW-1185">Reference proteome</keyword>
<keyword id="KW-0732">Signal</keyword>
<keyword id="KW-0812">Transmembrane</keyword>
<keyword id="KW-1133">Transmembrane helix</keyword>
<sequence length="1877" mass="204651">MGKRAGGAAAAAAAASTSSAAGLEPAAGRGGGPRSAAAGLLGALHLVMTLVVAAARAEKEAFIQSESIIEVLRFDDGGLLQTETTLGLGSYQQKSISLYRGNCRPIRFEPPMLDFHEQPVGMPKMEKVYLHNPSSEETITLVSISATTSHFHASFFQNRKILPGGNTSFDVVFLARVVGNVENTLFINTSNHGVFTYQVFGVGVPNPYRLRPFLGARVPVNSSFSPIINIHNPHSEPLQVVEMYSSGGDLHLELPTGQQGGTRKLWEIPPYETKGVMRASFSSREADNHTAFIRIKTNASDSTEFIILPVEVEVTTAPGIYSSTEMLDFGTLRTQDLPKVLNLHLLNSGTKDVPITSVRPTPQNDAITVHFKPVTLKASESKYTKVASISFDASRAKKPSQFSGKITVKAKEKSYSKLEIPYQAEVLDGYLGFDHAATLFHIQDSPADPVERPIYLTNTFSFAILIHDVLLPEEARIMFQVHNFSQPVLILPNESGYIFTLFFMPSTSSMHIDNNILLVTNASKFHLPVRVYTGFLDYFVLPPKIEERFIDFGVLSATEASSILFAIINSNPIELAIKSWHIIGDGLSIELVATERGNRSTVIASLPELERSSLPDQSPVTLASGHFAVFRVKLTAKKLEGVHDGAIQITTDYEILTIPVKAVIAVGSLTCFPKHMVLPPSFPGKIVHQSLNIMNSFSQKVKIQQIRSLSEDVRFYYKRLRGNREDLEPGKKSKIANIYFDPGLQCGDHCYIGLPFLSKSEPKVQPGVAMQEDLWDADWDAHQSLFKAWMGIKENAGHRLNAMFEVNTDLQKNIVSKVSAELSWPSVLSSPRLLKFPLTNTNCSSEEEISLENPADVPVYVQFIPLALYSNPSVFADKLVSRFNLSKVAKLDLRTLEFQVYRNSAHPLQSPTGFTEGLSRHFILNLILKPGEKKSVKVKFTPLHNRTVSSLIIVRNNLTVMDAVMVQGQGTTENLRVAGKLPGPGSSLRFKITEALLKDCIDRLKLREPNFTLKRTFKVENTGQLEIRVETIEISGYACEGYGFKVVNCQEFALSANASRDIVILFTPDFTASRVIRELKFVTSSGSEFVFVLNASLPYHMLAACAEALPRPNWELALYIIISGVMSALFLLVIGTAYLEAQGIWEPFRRRLSFEASNPPFDVGRPFDLRRIVGISSEGNLNTLGCEHSHGRGFYSNASSRPGTGSHRQCGTSVHPHSSHGSKNSADVDNVRTRNSSSMSSRTSPQAAASQSTSKTSPLVSETAAATQGHTASRKSRGAKQGQHSSQHHSHSHSPLEQHSQPPPPVPQHQEPPPERLSPAPLTHPSHPERASTTRHSSEDSDITSLIEAMDKDFDHHDSSPLDVFTEQPPSPMSKSKGKGKSLQQRKAKPPKKQEEKEKRGKGKPQEDELKDALADDDSSSTTTETSNPDTEPLLREDTEKHKGRPAVPEKQESELSQGKPKSKKLLNAKKEIPTDVKGSSFELPYTPSLENKQRRNLPTKIPLPTTLASGSKSRNPPKTKGTNKLVENRPVALSKFLPSSQELGNTSSSEGEKDSPPPEWDAVPVHKPSSSTDSLYKLSLQTLNADIFLKQRQTSPTPASPSLPTAPCPFTSRGSYSSVVNSSGSDTKAKQTSSSKSKLTKAASLPGKNGNPTFAAVAAGYDKSPGGNGFAKISSNKSDFSSSLGISHIPVDSDGSDSSGLWSPVSNPNSPDFTPLNSFSAFGNSFNLTGAVFSKLSRSCSQSSQRSWNEFNSGPSYLWDSPATDPSPSWPASSSSPTHTATSILGNSSGLWSTTPFSSSIWSSNINSNLPFSTPTNALSSISLMGTENSAAAHTPSASGPADDLGQTYNPWRIWSPTVGRRSSDPWSNSHFPHEN</sequence>
<proteinExistence type="evidence at transcript level"/>
<reference key="1">
    <citation type="journal article" date="2009" name="PLoS Biol.">
        <title>Lineage-specific biology revealed by a finished genome assembly of the mouse.</title>
        <authorList>
            <person name="Church D.M."/>
            <person name="Goodstadt L."/>
            <person name="Hillier L.W."/>
            <person name="Zody M.C."/>
            <person name="Goldstein S."/>
            <person name="She X."/>
            <person name="Bult C.J."/>
            <person name="Agarwala R."/>
            <person name="Cherry J.L."/>
            <person name="DiCuccio M."/>
            <person name="Hlavina W."/>
            <person name="Kapustin Y."/>
            <person name="Meric P."/>
            <person name="Maglott D."/>
            <person name="Birtle Z."/>
            <person name="Marques A.C."/>
            <person name="Graves T."/>
            <person name="Zhou S."/>
            <person name="Teague B."/>
            <person name="Potamousis K."/>
            <person name="Churas C."/>
            <person name="Place M."/>
            <person name="Herschleb J."/>
            <person name="Runnheim R."/>
            <person name="Forrest D."/>
            <person name="Amos-Landgraf J."/>
            <person name="Schwartz D.C."/>
            <person name="Cheng Z."/>
            <person name="Lindblad-Toh K."/>
            <person name="Eichler E.E."/>
            <person name="Ponting C.P."/>
        </authorList>
    </citation>
    <scope>NUCLEOTIDE SEQUENCE [LARGE SCALE GENOMIC DNA]</scope>
    <source>
        <strain>C57BL/6J</strain>
    </source>
</reference>
<reference key="2">
    <citation type="journal article" date="2000" name="Immunol. Lett.">
        <title>Use of mRNA differential display to study the action of lymphocyte subsets in vivo and application to a murine model of herpes simplex virus infection.</title>
        <authorList>
            <person name="Tscharke D.C."/>
            <person name="Wilkinson R."/>
            <person name="Simmons A."/>
        </authorList>
    </citation>
    <scope>NUCLEOTIDE SEQUENCE [MRNA] OF 54-1877</scope>
    <source>
        <strain>BALB/cJ</strain>
        <tissue>Brain</tissue>
    </source>
</reference>
<reference key="3">
    <citation type="submission" date="2002-10" db="EMBL/GenBank/DDBJ databases">
        <title>Prediction of the coding sequences of mouse homologues of KIAA gene: I. The complete nucleotide sequences of 100 mouse KIAA-homologous cDNAs identified by screening of terminal sequences of cDNA clones randomly sampled from size-fractionated libraries.</title>
        <authorList>
            <person name="Okazaki N."/>
            <person name="Kikuno R."/>
            <person name="Ohara R."/>
            <person name="Inamoto S."/>
            <person name="Hara Y."/>
            <person name="Nagase T."/>
            <person name="Ohara O."/>
            <person name="Koga H."/>
        </authorList>
    </citation>
    <scope>NUCLEOTIDE SEQUENCE [LARGE SCALE MRNA] OF 129-1877</scope>
    <source>
        <tissue>Brain</tissue>
    </source>
</reference>
<feature type="signal peptide" evidence="2">
    <location>
        <begin position="1"/>
        <end position="20"/>
    </location>
</feature>
<feature type="chain" id="PRO_0000097539" description="Transmembrane protein 131" evidence="2">
    <location>
        <begin position="21"/>
        <end position="1877"/>
    </location>
</feature>
<feature type="topological domain" description="Lumenal" evidence="4">
    <location>
        <begin position="21"/>
        <end position="1115"/>
    </location>
</feature>
<feature type="transmembrane region" description="Helical" evidence="2">
    <location>
        <begin position="1116"/>
        <end position="1136"/>
    </location>
</feature>
<feature type="topological domain" description="Cytoplasmic" evidence="4">
    <location>
        <begin position="1137"/>
        <end position="1877"/>
    </location>
</feature>
<feature type="region of interest" description="PapD-L domain" evidence="1">
    <location>
        <begin position="107"/>
        <end position="281"/>
    </location>
</feature>
<feature type="region of interest" description="Disordered" evidence="3">
    <location>
        <begin position="1197"/>
        <end position="1573"/>
    </location>
</feature>
<feature type="region of interest" description="Disordered" evidence="3">
    <location>
        <begin position="1590"/>
        <end position="1655"/>
    </location>
</feature>
<feature type="region of interest" description="Disordered" evidence="3">
    <location>
        <begin position="1679"/>
        <end position="1707"/>
    </location>
</feature>
<feature type="region of interest" description="Disordered" evidence="3">
    <location>
        <begin position="1830"/>
        <end position="1852"/>
    </location>
</feature>
<feature type="compositionally biased region" description="Polar residues" evidence="3">
    <location>
        <begin position="1197"/>
        <end position="1227"/>
    </location>
</feature>
<feature type="compositionally biased region" description="Low complexity" evidence="3">
    <location>
        <begin position="1233"/>
        <end position="1258"/>
    </location>
</feature>
<feature type="compositionally biased region" description="Pro residues" evidence="3">
    <location>
        <begin position="1301"/>
        <end position="1311"/>
    </location>
</feature>
<feature type="compositionally biased region" description="Basic and acidic residues" evidence="3">
    <location>
        <begin position="1326"/>
        <end position="1339"/>
    </location>
</feature>
<feature type="compositionally biased region" description="Basic and acidic residues" evidence="3">
    <location>
        <begin position="1349"/>
        <end position="1360"/>
    </location>
</feature>
<feature type="compositionally biased region" description="Basic residues" evidence="3">
    <location>
        <begin position="1376"/>
        <end position="1391"/>
    </location>
</feature>
<feature type="compositionally biased region" description="Basic and acidic residues" evidence="3">
    <location>
        <begin position="1392"/>
        <end position="1414"/>
    </location>
</feature>
<feature type="compositionally biased region" description="Low complexity" evidence="3">
    <location>
        <begin position="1420"/>
        <end position="1432"/>
    </location>
</feature>
<feature type="compositionally biased region" description="Polar residues" evidence="3">
    <location>
        <begin position="1507"/>
        <end position="1523"/>
    </location>
</feature>
<feature type="compositionally biased region" description="Polar residues" evidence="3">
    <location>
        <begin position="1538"/>
        <end position="1550"/>
    </location>
</feature>
<feature type="compositionally biased region" description="Pro residues" evidence="3">
    <location>
        <begin position="1599"/>
        <end position="1608"/>
    </location>
</feature>
<feature type="compositionally biased region" description="Low complexity" evidence="3">
    <location>
        <begin position="1609"/>
        <end position="1646"/>
    </location>
</feature>
<feature type="compositionally biased region" description="Polar residues" evidence="3">
    <location>
        <begin position="1830"/>
        <end position="1839"/>
    </location>
</feature>
<feature type="modified residue" description="Phosphoserine" evidence="1">
    <location>
        <position position="1318"/>
    </location>
</feature>
<feature type="modified residue" description="Phosphoserine" evidence="1">
    <location>
        <position position="1338"/>
    </location>
</feature>
<feature type="modified residue" description="Phosphoserine" evidence="1">
    <location>
        <position position="1371"/>
    </location>
</feature>
<feature type="modified residue" description="Phosphoserine" evidence="1">
    <location>
        <position position="1857"/>
    </location>
</feature>
<feature type="modified residue" description="Phosphoserine" evidence="1">
    <location>
        <position position="1865"/>
    </location>
</feature>
<feature type="sequence conflict" description="In Ref. 2; AAC15232." evidence="4" ref="2">
    <original>V</original>
    <variation>A</variation>
    <location>
        <position position="488"/>
    </location>
</feature>
<feature type="sequence conflict" description="In Ref. 2; AAC15232." evidence="4" ref="2">
    <original>C</original>
    <variation>R</variation>
    <location>
        <position position="750"/>
    </location>
</feature>
<feature type="sequence conflict" description="In Ref. 2; AAC15232." evidence="4" ref="2">
    <original>D</original>
    <variation>N</variation>
    <location>
        <position position="776"/>
    </location>
</feature>
<feature type="sequence conflict" description="In Ref. 3; BAC41405." evidence="4" ref="3">
    <original>S</original>
    <variation>F</variation>
    <location>
        <position position="935"/>
    </location>
</feature>
<feature type="sequence conflict" description="In Ref. 3; BAC41405." evidence="4" ref="3">
    <original>S</original>
    <variation>R</variation>
    <location>
        <position position="1790"/>
    </location>
</feature>
<accession>O70472</accession>
<accession>Q8CHH3</accession>
<organism evidence="6">
    <name type="scientific">Mus musculus</name>
    <name type="common">Mouse</name>
    <dbReference type="NCBI Taxonomy" id="10090"/>
    <lineage>
        <taxon>Eukaryota</taxon>
        <taxon>Metazoa</taxon>
        <taxon>Chordata</taxon>
        <taxon>Craniata</taxon>
        <taxon>Vertebrata</taxon>
        <taxon>Euteleostomi</taxon>
        <taxon>Mammalia</taxon>
        <taxon>Eutheria</taxon>
        <taxon>Euarchontoglires</taxon>
        <taxon>Glires</taxon>
        <taxon>Rodentia</taxon>
        <taxon>Myomorpha</taxon>
        <taxon>Muroidea</taxon>
        <taxon>Muridae</taxon>
        <taxon>Murinae</taxon>
        <taxon>Mus</taxon>
        <taxon>Mus</taxon>
    </lineage>
</organism>
<dbReference type="EMBL" id="AC084389">
    <property type="status" value="NOT_ANNOTATED_CDS"/>
    <property type="molecule type" value="Genomic_DNA"/>
</dbReference>
<dbReference type="EMBL" id="AC123854">
    <property type="status" value="NOT_ANNOTATED_CDS"/>
    <property type="molecule type" value="Genomic_DNA"/>
</dbReference>
<dbReference type="EMBL" id="AF060565">
    <property type="protein sequence ID" value="AAC15232.1"/>
    <property type="status" value="ALT_SEQ"/>
    <property type="molecule type" value="mRNA"/>
</dbReference>
<dbReference type="EMBL" id="AB093221">
    <property type="protein sequence ID" value="BAC41405.1"/>
    <property type="molecule type" value="mRNA"/>
</dbReference>
<dbReference type="CCDS" id="CCDS35538.1"/>
<dbReference type="PIR" id="T14280">
    <property type="entry name" value="T14280"/>
</dbReference>
<dbReference type="RefSeq" id="NP_061360.2">
    <property type="nucleotide sequence ID" value="NM_018872.2"/>
</dbReference>
<dbReference type="SMR" id="O70472"/>
<dbReference type="BioGRID" id="207783">
    <property type="interactions" value="4"/>
</dbReference>
<dbReference type="FunCoup" id="O70472">
    <property type="interactions" value="2154"/>
</dbReference>
<dbReference type="STRING" id="10090.ENSMUSP00000142307"/>
<dbReference type="GlyConnect" id="2788">
    <property type="glycosylation" value="4 N-Linked glycans (2 sites)"/>
</dbReference>
<dbReference type="GlyCosmos" id="O70472">
    <property type="glycosylation" value="2 sites, 4 glycans"/>
</dbReference>
<dbReference type="GlyGen" id="O70472">
    <property type="glycosylation" value="9 sites, 10 N-linked glycans (7 sites)"/>
</dbReference>
<dbReference type="iPTMnet" id="O70472"/>
<dbReference type="PhosphoSitePlus" id="O70472"/>
<dbReference type="jPOST" id="O70472"/>
<dbReference type="PaxDb" id="10090-ENSMUSP00000027290"/>
<dbReference type="PeptideAtlas" id="O70472"/>
<dbReference type="ProteomicsDB" id="259526"/>
<dbReference type="Pumba" id="O70472"/>
<dbReference type="Antibodypedia" id="9002">
    <property type="antibodies" value="23 antibodies from 9 providers"/>
</dbReference>
<dbReference type="DNASU" id="56030"/>
<dbReference type="Ensembl" id="ENSMUST00000027290.12">
    <property type="protein sequence ID" value="ENSMUSP00000027290.6"/>
    <property type="gene ID" value="ENSMUSG00000026116.12"/>
</dbReference>
<dbReference type="Ensembl" id="ENSMUST00000194563.6">
    <property type="protein sequence ID" value="ENSMUSP00000142307.2"/>
    <property type="gene ID" value="ENSMUSG00000026116.12"/>
</dbReference>
<dbReference type="GeneID" id="56030"/>
<dbReference type="KEGG" id="mmu:56030"/>
<dbReference type="UCSC" id="uc007ard.1">
    <property type="organism name" value="mouse"/>
</dbReference>
<dbReference type="AGR" id="MGI:1927110"/>
<dbReference type="CTD" id="23505"/>
<dbReference type="MGI" id="MGI:1927110">
    <property type="gene designation" value="Tmem131"/>
</dbReference>
<dbReference type="VEuPathDB" id="HostDB:ENSMUSG00000026116"/>
<dbReference type="eggNOG" id="KOG3620">
    <property type="taxonomic scope" value="Eukaryota"/>
</dbReference>
<dbReference type="GeneTree" id="ENSGT00530000063614"/>
<dbReference type="HOGENOM" id="CLU_002491_1_1_1"/>
<dbReference type="InParanoid" id="O70472"/>
<dbReference type="OMA" id="NQHTNRT"/>
<dbReference type="OrthoDB" id="168404at2759"/>
<dbReference type="PhylomeDB" id="O70472"/>
<dbReference type="TreeFam" id="TF321435"/>
<dbReference type="BioGRID-ORCS" id="56030">
    <property type="hits" value="3 hits in 79 CRISPR screens"/>
</dbReference>
<dbReference type="ChiTaRS" id="Tmem131">
    <property type="organism name" value="mouse"/>
</dbReference>
<dbReference type="PRO" id="PR:O70472"/>
<dbReference type="Proteomes" id="UP000000589">
    <property type="component" value="Chromosome 1"/>
</dbReference>
<dbReference type="RNAct" id="O70472">
    <property type="molecule type" value="protein"/>
</dbReference>
<dbReference type="Bgee" id="ENSMUSG00000026116">
    <property type="expression patterns" value="Expressed in late embryo and 266 other cell types or tissues"/>
</dbReference>
<dbReference type="ExpressionAtlas" id="O70472">
    <property type="expression patterns" value="baseline and differential"/>
</dbReference>
<dbReference type="GO" id="GO:0016020">
    <property type="term" value="C:membrane"/>
    <property type="evidence" value="ECO:0007669"/>
    <property type="project" value="UniProtKB-SubCell"/>
</dbReference>
<dbReference type="GO" id="GO:0005518">
    <property type="term" value="F:collagen binding"/>
    <property type="evidence" value="ECO:0007669"/>
    <property type="project" value="Ensembl"/>
</dbReference>
<dbReference type="GO" id="GO:0032964">
    <property type="term" value="P:collagen biosynthetic process"/>
    <property type="evidence" value="ECO:0000250"/>
    <property type="project" value="UniProtKB"/>
</dbReference>
<dbReference type="Gene3D" id="2.60.40.10">
    <property type="entry name" value="Immunoglobulins"/>
    <property type="match status" value="3"/>
</dbReference>
<dbReference type="InterPro" id="IPR013783">
    <property type="entry name" value="Ig-like_fold"/>
</dbReference>
<dbReference type="InterPro" id="IPR056311">
    <property type="entry name" value="Ig_TMEM131_2"/>
</dbReference>
<dbReference type="InterPro" id="IPR055435">
    <property type="entry name" value="Ig_TMEM131L_3"/>
</dbReference>
<dbReference type="InterPro" id="IPR055436">
    <property type="entry name" value="Ig_TMEM131L_4"/>
</dbReference>
<dbReference type="InterPro" id="IPR055437">
    <property type="entry name" value="Ig_TMEM131L_5"/>
</dbReference>
<dbReference type="InterPro" id="IPR039877">
    <property type="entry name" value="TMEM131-like"/>
</dbReference>
<dbReference type="InterPro" id="IPR045695">
    <property type="entry name" value="TMEM131-like_Ig_dom2"/>
</dbReference>
<dbReference type="InterPro" id="IPR022113">
    <property type="entry name" value="TMEM131-like_N"/>
</dbReference>
<dbReference type="PANTHER" id="PTHR22050">
    <property type="entry name" value="RW1 PROTEIN HOMOLOG"/>
    <property type="match status" value="1"/>
</dbReference>
<dbReference type="PANTHER" id="PTHR22050:SF1">
    <property type="entry name" value="TRANSMEMBRANE PROTEIN 131"/>
    <property type="match status" value="1"/>
</dbReference>
<dbReference type="Pfam" id="PF24495">
    <property type="entry name" value="Ig_TMEM131_2"/>
    <property type="match status" value="1"/>
</dbReference>
<dbReference type="Pfam" id="PF19532">
    <property type="entry name" value="Ig_TMEM131L_2nd"/>
    <property type="match status" value="1"/>
</dbReference>
<dbReference type="Pfam" id="PF24498">
    <property type="entry name" value="Ig_TMEM131L_3"/>
    <property type="match status" value="1"/>
</dbReference>
<dbReference type="Pfam" id="PF24499">
    <property type="entry name" value="Ig_TMEM131L_4"/>
    <property type="match status" value="1"/>
</dbReference>
<dbReference type="Pfam" id="PF24501">
    <property type="entry name" value="Ig_TMEM131L_5"/>
    <property type="match status" value="1"/>
</dbReference>
<dbReference type="Pfam" id="PF12371">
    <property type="entry name" value="TMEM131_like_N"/>
    <property type="match status" value="1"/>
</dbReference>